<proteinExistence type="evidence at protein level"/>
<protein>
    <recommendedName>
        <fullName evidence="3">Uncharacterized secreted protein ARB_05566</fullName>
    </recommendedName>
</protein>
<gene>
    <name type="ORF">ARB_05566</name>
</gene>
<organism>
    <name type="scientific">Arthroderma benhamiae (strain ATCC MYA-4681 / CBS 112371)</name>
    <name type="common">Trichophyton mentagrophytes</name>
    <dbReference type="NCBI Taxonomy" id="663331"/>
    <lineage>
        <taxon>Eukaryota</taxon>
        <taxon>Fungi</taxon>
        <taxon>Dikarya</taxon>
        <taxon>Ascomycota</taxon>
        <taxon>Pezizomycotina</taxon>
        <taxon>Eurotiomycetes</taxon>
        <taxon>Eurotiomycetidae</taxon>
        <taxon>Onygenales</taxon>
        <taxon>Arthrodermataceae</taxon>
        <taxon>Trichophyton</taxon>
    </lineage>
</organism>
<comment type="subcellular location">
    <subcellularLocation>
        <location evidence="2">Secreted</location>
    </subcellularLocation>
</comment>
<sequence length="190" mass="20542">MKVFAYIALATVVAGANIRNHFGDNCKGGYLDYPNIAQRICASALHDKIKGAVTVAFSQLPQHSYMNGYQNTRDGGICGSRQKQQNVGNTDHKCLPKLAGGAEYAGSSWTAPGFKAASEKDMECTSEMAPHALVLNDGHKYALGGMEKDMINTLYSMAIEGKGFQELPTEFGAFEIEKEGAQQRAQEIKA</sequence>
<keyword id="KW-1185">Reference proteome</keyword>
<keyword id="KW-0964">Secreted</keyword>
<keyword id="KW-0732">Signal</keyword>
<name>A5566_ARTBC</name>
<reference key="1">
    <citation type="journal article" date="2011" name="Genome Biol.">
        <title>Comparative and functional genomics provide insights into the pathogenicity of dermatophytic fungi.</title>
        <authorList>
            <person name="Burmester A."/>
            <person name="Shelest E."/>
            <person name="Gloeckner G."/>
            <person name="Heddergott C."/>
            <person name="Schindler S."/>
            <person name="Staib P."/>
            <person name="Heidel A."/>
            <person name="Felder M."/>
            <person name="Petzold A."/>
            <person name="Szafranski K."/>
            <person name="Feuermann M."/>
            <person name="Pedruzzi I."/>
            <person name="Priebe S."/>
            <person name="Groth M."/>
            <person name="Winkler R."/>
            <person name="Li W."/>
            <person name="Kniemeyer O."/>
            <person name="Schroeckh V."/>
            <person name="Hertweck C."/>
            <person name="Hube B."/>
            <person name="White T.C."/>
            <person name="Platzer M."/>
            <person name="Guthke R."/>
            <person name="Heitman J."/>
            <person name="Woestemeyer J."/>
            <person name="Zipfel P.F."/>
            <person name="Monod M."/>
            <person name="Brakhage A.A."/>
        </authorList>
    </citation>
    <scope>NUCLEOTIDE SEQUENCE [LARGE SCALE GENOMIC DNA]</scope>
    <source>
        <strain>ATCC MYA-4681 / CBS 112371</strain>
    </source>
</reference>
<reference key="2">
    <citation type="journal article" date="2011" name="Proteomics">
        <title>Identification of novel secreted proteases during extracellular proteolysis by dermatophytes at acidic pH.</title>
        <authorList>
            <person name="Sriranganadane D."/>
            <person name="Waridel P."/>
            <person name="Salamin K."/>
            <person name="Feuermann M."/>
            <person name="Mignon B."/>
            <person name="Staib P."/>
            <person name="Neuhaus J.M."/>
            <person name="Quadroni M."/>
            <person name="Monod M."/>
        </authorList>
    </citation>
    <scope>IDENTIFICATION BY MASS SPECTROMETRY</scope>
    <scope>SUBCELLULAR LOCATION</scope>
</reference>
<dbReference type="EMBL" id="ABSU01000003">
    <property type="protein sequence ID" value="EFE35524.1"/>
    <property type="molecule type" value="Genomic_DNA"/>
</dbReference>
<dbReference type="RefSeq" id="XP_003016169.1">
    <property type="nucleotide sequence ID" value="XM_003016123.1"/>
</dbReference>
<dbReference type="SMR" id="D4AMW3"/>
<dbReference type="GeneID" id="9524158"/>
<dbReference type="KEGG" id="abe:ARB_05566"/>
<dbReference type="eggNOG" id="ENOG502SYVI">
    <property type="taxonomic scope" value="Eukaryota"/>
</dbReference>
<dbReference type="HOGENOM" id="CLU_1422363_0_0_1"/>
<dbReference type="OMA" id="GANIRNH"/>
<dbReference type="OrthoDB" id="5383526at2759"/>
<dbReference type="Proteomes" id="UP000008866">
    <property type="component" value="Unassembled WGS sequence"/>
</dbReference>
<dbReference type="GO" id="GO:0005576">
    <property type="term" value="C:extracellular region"/>
    <property type="evidence" value="ECO:0007669"/>
    <property type="project" value="UniProtKB-SubCell"/>
</dbReference>
<evidence type="ECO:0000255" key="1"/>
<evidence type="ECO:0000269" key="2">
    <source>
    </source>
</evidence>
<evidence type="ECO:0000305" key="3"/>
<feature type="signal peptide" evidence="1">
    <location>
        <begin position="1"/>
        <end position="15"/>
    </location>
</feature>
<feature type="chain" id="PRO_0000434668" description="Uncharacterized secreted protein ARB_05566" evidence="1">
    <location>
        <begin position="16"/>
        <end position="190"/>
    </location>
</feature>
<accession>D4AMW3</accession>